<name>PPA6_MOUSE</name>
<reference key="1">
    <citation type="journal article" date="2002" name="Gut">
        <title>Novel human and mouse genes encoding an acid phosphatase family member and its downregulation in W/W(V) mouse jejunum.</title>
        <authorList>
            <person name="Takayama I."/>
            <person name="Daigo Y."/>
            <person name="Ward S.M."/>
            <person name="Sanders K.M."/>
            <person name="Walker R.L."/>
            <person name="Horowitz B."/>
            <person name="Yamanaka T."/>
            <person name="Fujino M.A."/>
        </authorList>
    </citation>
    <scope>NUCLEOTIDE SEQUENCE [MRNA] (ISOFORM 1)</scope>
    <scope>SUBCELLULAR LOCATION</scope>
</reference>
<reference key="2">
    <citation type="journal article" date="2005" name="Science">
        <title>The transcriptional landscape of the mammalian genome.</title>
        <authorList>
            <person name="Carninci P."/>
            <person name="Kasukawa T."/>
            <person name="Katayama S."/>
            <person name="Gough J."/>
            <person name="Frith M.C."/>
            <person name="Maeda N."/>
            <person name="Oyama R."/>
            <person name="Ravasi T."/>
            <person name="Lenhard B."/>
            <person name="Wells C."/>
            <person name="Kodzius R."/>
            <person name="Shimokawa K."/>
            <person name="Bajic V.B."/>
            <person name="Brenner S.E."/>
            <person name="Batalov S."/>
            <person name="Forrest A.R."/>
            <person name="Zavolan M."/>
            <person name="Davis M.J."/>
            <person name="Wilming L.G."/>
            <person name="Aidinis V."/>
            <person name="Allen J.E."/>
            <person name="Ambesi-Impiombato A."/>
            <person name="Apweiler R."/>
            <person name="Aturaliya R.N."/>
            <person name="Bailey T.L."/>
            <person name="Bansal M."/>
            <person name="Baxter L."/>
            <person name="Beisel K.W."/>
            <person name="Bersano T."/>
            <person name="Bono H."/>
            <person name="Chalk A.M."/>
            <person name="Chiu K.P."/>
            <person name="Choudhary V."/>
            <person name="Christoffels A."/>
            <person name="Clutterbuck D.R."/>
            <person name="Crowe M.L."/>
            <person name="Dalla E."/>
            <person name="Dalrymple B.P."/>
            <person name="de Bono B."/>
            <person name="Della Gatta G."/>
            <person name="di Bernardo D."/>
            <person name="Down T."/>
            <person name="Engstrom P."/>
            <person name="Fagiolini M."/>
            <person name="Faulkner G."/>
            <person name="Fletcher C.F."/>
            <person name="Fukushima T."/>
            <person name="Furuno M."/>
            <person name="Futaki S."/>
            <person name="Gariboldi M."/>
            <person name="Georgii-Hemming P."/>
            <person name="Gingeras T.R."/>
            <person name="Gojobori T."/>
            <person name="Green R.E."/>
            <person name="Gustincich S."/>
            <person name="Harbers M."/>
            <person name="Hayashi Y."/>
            <person name="Hensch T.K."/>
            <person name="Hirokawa N."/>
            <person name="Hill D."/>
            <person name="Huminiecki L."/>
            <person name="Iacono M."/>
            <person name="Ikeo K."/>
            <person name="Iwama A."/>
            <person name="Ishikawa T."/>
            <person name="Jakt M."/>
            <person name="Kanapin A."/>
            <person name="Katoh M."/>
            <person name="Kawasawa Y."/>
            <person name="Kelso J."/>
            <person name="Kitamura H."/>
            <person name="Kitano H."/>
            <person name="Kollias G."/>
            <person name="Krishnan S.P."/>
            <person name="Kruger A."/>
            <person name="Kummerfeld S.K."/>
            <person name="Kurochkin I.V."/>
            <person name="Lareau L.F."/>
            <person name="Lazarevic D."/>
            <person name="Lipovich L."/>
            <person name="Liu J."/>
            <person name="Liuni S."/>
            <person name="McWilliam S."/>
            <person name="Madan Babu M."/>
            <person name="Madera M."/>
            <person name="Marchionni L."/>
            <person name="Matsuda H."/>
            <person name="Matsuzawa S."/>
            <person name="Miki H."/>
            <person name="Mignone F."/>
            <person name="Miyake S."/>
            <person name="Morris K."/>
            <person name="Mottagui-Tabar S."/>
            <person name="Mulder N."/>
            <person name="Nakano N."/>
            <person name="Nakauchi H."/>
            <person name="Ng P."/>
            <person name="Nilsson R."/>
            <person name="Nishiguchi S."/>
            <person name="Nishikawa S."/>
            <person name="Nori F."/>
            <person name="Ohara O."/>
            <person name="Okazaki Y."/>
            <person name="Orlando V."/>
            <person name="Pang K.C."/>
            <person name="Pavan W.J."/>
            <person name="Pavesi G."/>
            <person name="Pesole G."/>
            <person name="Petrovsky N."/>
            <person name="Piazza S."/>
            <person name="Reed J."/>
            <person name="Reid J.F."/>
            <person name="Ring B.Z."/>
            <person name="Ringwald M."/>
            <person name="Rost B."/>
            <person name="Ruan Y."/>
            <person name="Salzberg S.L."/>
            <person name="Sandelin A."/>
            <person name="Schneider C."/>
            <person name="Schoenbach C."/>
            <person name="Sekiguchi K."/>
            <person name="Semple C.A."/>
            <person name="Seno S."/>
            <person name="Sessa L."/>
            <person name="Sheng Y."/>
            <person name="Shibata Y."/>
            <person name="Shimada H."/>
            <person name="Shimada K."/>
            <person name="Silva D."/>
            <person name="Sinclair B."/>
            <person name="Sperling S."/>
            <person name="Stupka E."/>
            <person name="Sugiura K."/>
            <person name="Sultana R."/>
            <person name="Takenaka Y."/>
            <person name="Taki K."/>
            <person name="Tammoja K."/>
            <person name="Tan S.L."/>
            <person name="Tang S."/>
            <person name="Taylor M.S."/>
            <person name="Tegner J."/>
            <person name="Teichmann S.A."/>
            <person name="Ueda H.R."/>
            <person name="van Nimwegen E."/>
            <person name="Verardo R."/>
            <person name="Wei C.L."/>
            <person name="Yagi K."/>
            <person name="Yamanishi H."/>
            <person name="Zabarovsky E."/>
            <person name="Zhu S."/>
            <person name="Zimmer A."/>
            <person name="Hide W."/>
            <person name="Bult C."/>
            <person name="Grimmond S.M."/>
            <person name="Teasdale R.D."/>
            <person name="Liu E.T."/>
            <person name="Brusic V."/>
            <person name="Quackenbush J."/>
            <person name="Wahlestedt C."/>
            <person name="Mattick J.S."/>
            <person name="Hume D.A."/>
            <person name="Kai C."/>
            <person name="Sasaki D."/>
            <person name="Tomaru Y."/>
            <person name="Fukuda S."/>
            <person name="Kanamori-Katayama M."/>
            <person name="Suzuki M."/>
            <person name="Aoki J."/>
            <person name="Arakawa T."/>
            <person name="Iida J."/>
            <person name="Imamura K."/>
            <person name="Itoh M."/>
            <person name="Kato T."/>
            <person name="Kawaji H."/>
            <person name="Kawagashira N."/>
            <person name="Kawashima T."/>
            <person name="Kojima M."/>
            <person name="Kondo S."/>
            <person name="Konno H."/>
            <person name="Nakano K."/>
            <person name="Ninomiya N."/>
            <person name="Nishio T."/>
            <person name="Okada M."/>
            <person name="Plessy C."/>
            <person name="Shibata K."/>
            <person name="Shiraki T."/>
            <person name="Suzuki S."/>
            <person name="Tagami M."/>
            <person name="Waki K."/>
            <person name="Watahiki A."/>
            <person name="Okamura-Oho Y."/>
            <person name="Suzuki H."/>
            <person name="Kawai J."/>
            <person name="Hayashizaki Y."/>
        </authorList>
    </citation>
    <scope>NUCLEOTIDE SEQUENCE [LARGE SCALE MRNA] (ISOFORMS 1 AND 2)</scope>
    <source>
        <strain>C57BL/6J</strain>
        <strain>NOD</strain>
        <tissue>Embryo</tissue>
        <tissue>Pituitary</tissue>
        <tissue>Spleen</tissue>
    </source>
</reference>
<reference key="3">
    <citation type="journal article" date="2004" name="Genome Res.">
        <title>The status, quality, and expansion of the NIH full-length cDNA project: the Mammalian Gene Collection (MGC).</title>
        <authorList>
            <consortium name="The MGC Project Team"/>
        </authorList>
    </citation>
    <scope>NUCLEOTIDE SEQUENCE [LARGE SCALE MRNA] (ISOFORM 1)</scope>
    <source>
        <strain>FVB/N-3</strain>
        <tissue>Mammary tumor</tissue>
    </source>
</reference>
<reference key="4">
    <citation type="journal article" date="2003" name="J. Lipid Res.">
        <title>Role of phospholipase D in agonist-stimulated lysophosphatidic acid synthesis by ovarian cancer cells.</title>
        <authorList>
            <person name="Luquain C."/>
            <person name="Singh A."/>
            <person name="Wang L."/>
            <person name="Natarajan V."/>
            <person name="Morris A.J."/>
        </authorList>
    </citation>
    <scope>NUCLEOTIDE SEQUENCE [MRNA] OF 45-418 (ISOFORM 1)</scope>
</reference>
<reference key="5">
    <citation type="journal article" date="2010" name="Cell">
        <title>A tissue-specific atlas of mouse protein phosphorylation and expression.</title>
        <authorList>
            <person name="Huttlin E.L."/>
            <person name="Jedrychowski M.P."/>
            <person name="Elias J.E."/>
            <person name="Goswami T."/>
            <person name="Rad R."/>
            <person name="Beausoleil S.A."/>
            <person name="Villen J."/>
            <person name="Haas W."/>
            <person name="Sowa M.E."/>
            <person name="Gygi S.P."/>
        </authorList>
    </citation>
    <scope>IDENTIFICATION BY MASS SPECTROMETRY [LARGE SCALE ANALYSIS]</scope>
    <source>
        <tissue>Brain</tissue>
        <tissue>Brown adipose tissue</tissue>
        <tissue>Heart</tissue>
        <tissue>Kidney</tissue>
        <tissue>Liver</tissue>
        <tissue>Lung</tissue>
        <tissue>Pancreas</tissue>
        <tissue>Spleen</tissue>
        <tissue>Testis</tissue>
    </source>
</reference>
<dbReference type="EC" id="3.1.3.2" evidence="2"/>
<dbReference type="EMBL" id="AB030038">
    <property type="protein sequence ID" value="BAA94308.1"/>
    <property type="status" value="ALT_FRAME"/>
    <property type="molecule type" value="mRNA"/>
</dbReference>
<dbReference type="EMBL" id="AK077729">
    <property type="protein sequence ID" value="BAC36983.1"/>
    <property type="molecule type" value="mRNA"/>
</dbReference>
<dbReference type="EMBL" id="AK089736">
    <property type="protein sequence ID" value="BAC40949.1"/>
    <property type="molecule type" value="mRNA"/>
</dbReference>
<dbReference type="EMBL" id="AK160271">
    <property type="protein sequence ID" value="BAE35722.1"/>
    <property type="molecule type" value="mRNA"/>
</dbReference>
<dbReference type="EMBL" id="AK165356">
    <property type="protein sequence ID" value="BAE38147.1"/>
    <property type="molecule type" value="mRNA"/>
</dbReference>
<dbReference type="EMBL" id="AK171757">
    <property type="protein sequence ID" value="BAE42654.1"/>
    <property type="molecule type" value="mRNA"/>
</dbReference>
<dbReference type="EMBL" id="BC047276">
    <property type="protein sequence ID" value="AAH47276.1"/>
    <property type="molecule type" value="mRNA"/>
</dbReference>
<dbReference type="EMBL" id="AF216223">
    <property type="protein sequence ID" value="AAF20010.1"/>
    <property type="status" value="ALT_FRAME"/>
    <property type="molecule type" value="mRNA"/>
</dbReference>
<dbReference type="CCDS" id="CCDS17653.1">
    <molecule id="Q8BP40-1"/>
</dbReference>
<dbReference type="RefSeq" id="NP_062774.2">
    <molecule id="Q8BP40-1"/>
    <property type="nucleotide sequence ID" value="NM_019800.4"/>
</dbReference>
<dbReference type="SMR" id="Q8BP40"/>
<dbReference type="BioGRID" id="211627">
    <property type="interactions" value="1"/>
</dbReference>
<dbReference type="FunCoup" id="Q8BP40">
    <property type="interactions" value="1212"/>
</dbReference>
<dbReference type="IntAct" id="Q8BP40">
    <property type="interactions" value="1"/>
</dbReference>
<dbReference type="MINT" id="Q8BP40"/>
<dbReference type="STRING" id="10090.ENSMUSP00000088263"/>
<dbReference type="GlyGen" id="Q8BP40">
    <property type="glycosylation" value="1 site, 1 O-linked glycan (1 site)"/>
</dbReference>
<dbReference type="iPTMnet" id="Q8BP40"/>
<dbReference type="PhosphoSitePlus" id="Q8BP40"/>
<dbReference type="SwissPalm" id="Q8BP40"/>
<dbReference type="jPOST" id="Q8BP40"/>
<dbReference type="PaxDb" id="10090-ENSMUSP00000088263"/>
<dbReference type="PeptideAtlas" id="Q8BP40"/>
<dbReference type="ProteomicsDB" id="289728">
    <molecule id="Q8BP40-1"/>
</dbReference>
<dbReference type="ProteomicsDB" id="289729">
    <molecule id="Q8BP40-2"/>
</dbReference>
<dbReference type="Pumba" id="Q8BP40"/>
<dbReference type="Antibodypedia" id="33980">
    <property type="antibodies" value="176 antibodies from 23 providers"/>
</dbReference>
<dbReference type="DNASU" id="66659"/>
<dbReference type="Ensembl" id="ENSMUST00000090759.5">
    <molecule id="Q8BP40-1"/>
    <property type="protein sequence ID" value="ENSMUSP00000088263.5"/>
    <property type="gene ID" value="ENSMUSG00000028093.16"/>
</dbReference>
<dbReference type="GeneID" id="66659"/>
<dbReference type="KEGG" id="mmu:66659"/>
<dbReference type="UCSC" id="uc008qoq.2">
    <molecule id="Q8BP40-1"/>
    <property type="organism name" value="mouse"/>
</dbReference>
<dbReference type="AGR" id="MGI:1931010"/>
<dbReference type="CTD" id="51205"/>
<dbReference type="MGI" id="MGI:1931010">
    <property type="gene designation" value="Acp6"/>
</dbReference>
<dbReference type="VEuPathDB" id="HostDB:ENSMUSG00000028093"/>
<dbReference type="eggNOG" id="KOG3720">
    <property type="taxonomic scope" value="Eukaryota"/>
</dbReference>
<dbReference type="GeneTree" id="ENSGT00940000158408"/>
<dbReference type="HOGENOM" id="CLU_030431_5_0_1"/>
<dbReference type="InParanoid" id="Q8BP40"/>
<dbReference type="OMA" id="SWPPFTS"/>
<dbReference type="OrthoDB" id="10257284at2759"/>
<dbReference type="PhylomeDB" id="Q8BP40"/>
<dbReference type="TreeFam" id="TF318821"/>
<dbReference type="Reactome" id="R-MMU-1483166">
    <property type="pathway name" value="Synthesis of PA"/>
</dbReference>
<dbReference type="BioGRID-ORCS" id="66659">
    <property type="hits" value="2 hits in 81 CRISPR screens"/>
</dbReference>
<dbReference type="ChiTaRS" id="Acp6">
    <property type="organism name" value="mouse"/>
</dbReference>
<dbReference type="PRO" id="PR:Q8BP40"/>
<dbReference type="Proteomes" id="UP000000589">
    <property type="component" value="Chromosome 3"/>
</dbReference>
<dbReference type="RNAct" id="Q8BP40">
    <property type="molecule type" value="protein"/>
</dbReference>
<dbReference type="Bgee" id="ENSMUSG00000028093">
    <property type="expression patterns" value="Expressed in skin of snout and 225 other cell types or tissues"/>
</dbReference>
<dbReference type="GO" id="GO:0005737">
    <property type="term" value="C:cytoplasm"/>
    <property type="evidence" value="ECO:0000266"/>
    <property type="project" value="MGI"/>
</dbReference>
<dbReference type="GO" id="GO:0005739">
    <property type="term" value="C:mitochondrion"/>
    <property type="evidence" value="ECO:0007005"/>
    <property type="project" value="MGI"/>
</dbReference>
<dbReference type="GO" id="GO:0003993">
    <property type="term" value="F:acid phosphatase activity"/>
    <property type="evidence" value="ECO:0007669"/>
    <property type="project" value="UniProtKB-EC"/>
</dbReference>
<dbReference type="GO" id="GO:0052642">
    <property type="term" value="F:lysophosphatidic acid phosphatase activity"/>
    <property type="evidence" value="ECO:0000250"/>
    <property type="project" value="UniProtKB"/>
</dbReference>
<dbReference type="GO" id="GO:0002244">
    <property type="term" value="P:hematopoietic progenitor cell differentiation"/>
    <property type="evidence" value="ECO:0000316"/>
    <property type="project" value="MGI"/>
</dbReference>
<dbReference type="GO" id="GO:2001311">
    <property type="term" value="P:lysobisphosphatidic acid metabolic process"/>
    <property type="evidence" value="ECO:0000250"/>
    <property type="project" value="UniProtKB"/>
</dbReference>
<dbReference type="CDD" id="cd07061">
    <property type="entry name" value="HP_HAP_like"/>
    <property type="match status" value="1"/>
</dbReference>
<dbReference type="FunFam" id="3.40.50.1240:FF:000030">
    <property type="entry name" value="Lysophosphatidic acid phosphatase type 6"/>
    <property type="match status" value="1"/>
</dbReference>
<dbReference type="Gene3D" id="3.40.50.1240">
    <property type="entry name" value="Phosphoglycerate mutase-like"/>
    <property type="match status" value="1"/>
</dbReference>
<dbReference type="InterPro" id="IPR033379">
    <property type="entry name" value="Acid_Pase_AS"/>
</dbReference>
<dbReference type="InterPro" id="IPR000560">
    <property type="entry name" value="His_Pase_clade-2"/>
</dbReference>
<dbReference type="InterPro" id="IPR029033">
    <property type="entry name" value="His_PPase_superfam"/>
</dbReference>
<dbReference type="InterPro" id="IPR050645">
    <property type="entry name" value="Histidine_acid_phosphatase"/>
</dbReference>
<dbReference type="PANTHER" id="PTHR11567">
    <property type="entry name" value="ACID PHOSPHATASE-RELATED"/>
    <property type="match status" value="1"/>
</dbReference>
<dbReference type="PANTHER" id="PTHR11567:SF202">
    <property type="entry name" value="LYSOPHOSPHATIDIC ACID PHOSPHATASE TYPE 6"/>
    <property type="match status" value="1"/>
</dbReference>
<dbReference type="Pfam" id="PF00328">
    <property type="entry name" value="His_Phos_2"/>
    <property type="match status" value="1"/>
</dbReference>
<dbReference type="SUPFAM" id="SSF53254">
    <property type="entry name" value="Phosphoglycerate mutase-like"/>
    <property type="match status" value="1"/>
</dbReference>
<dbReference type="PROSITE" id="PS00616">
    <property type="entry name" value="HIS_ACID_PHOSPHAT_1"/>
    <property type="match status" value="1"/>
</dbReference>
<feature type="transit peptide" description="Mitochondrion" evidence="1">
    <location>
        <begin position="1"/>
        <end position="25"/>
    </location>
</feature>
<feature type="chain" id="PRO_0000023966" description="Lysophosphatidic acid phosphatase type 6">
    <location>
        <begin position="26"/>
        <end position="418"/>
    </location>
</feature>
<feature type="region of interest" description="Substrate binding" evidence="1">
    <location>
        <begin position="51"/>
        <end position="161"/>
    </location>
</feature>
<feature type="active site" description="Nucleophile" evidence="1">
    <location>
        <position position="52"/>
    </location>
</feature>
<feature type="active site" description="Proton donor" evidence="1">
    <location>
        <position position="327"/>
    </location>
</feature>
<feature type="splice variant" id="VSP_014123" description="In isoform 2." evidence="4">
    <original>EWNPKLLEIPPQTRFDYTVTNLAGGPKPHSHYDTEYRKTTLRGGVLAGQLTKVGMQQMFALGEKLRKNYVEDIPFLSPVYNPQEVFIRSTNM</original>
    <variation>RGGPQRGSWGHTLASPVGARAGSRPEGNNSRLALRLWPGVIIPCSSQTTGVVCKPSWLGQPLPPKLSVAWCSETFERCIRMSQATVLIKCRF</variation>
    <location>
        <begin position="68"/>
        <end position="159"/>
    </location>
</feature>
<feature type="splice variant" id="VSP_014124" description="In isoform 2." evidence="4">
    <location>
        <begin position="160"/>
        <end position="418"/>
    </location>
</feature>
<feature type="sequence conflict" description="In Ref. 4; AAF20010." evidence="5" ref="4">
    <original>EK</original>
    <variation>KR</variation>
    <location>
        <begin position="130"/>
        <end position="131"/>
    </location>
</feature>
<feature type="sequence conflict" description="In Ref. 4; AAF20010." evidence="5" ref="4">
    <original>V</original>
    <variation>L</variation>
    <location>
        <position position="137"/>
    </location>
</feature>
<feature type="sequence conflict" description="In Ref. 4; AAF20010." evidence="5" ref="4">
    <original>F</original>
    <variation>L</variation>
    <location>
        <position position="142"/>
    </location>
</feature>
<feature type="sequence conflict" description="In Ref. 4; AAF20010." evidence="5" ref="4">
    <original>I</original>
    <variation>L</variation>
    <location>
        <position position="289"/>
    </location>
</feature>
<feature type="sequence conflict" description="In Ref. 4; AAF20010." evidence="5" ref="4">
    <original>G</original>
    <variation>E</variation>
    <location>
        <position position="302"/>
    </location>
</feature>
<feature type="sequence conflict" description="In Ref. 4; AAF20010." evidence="5" ref="4">
    <original>S</original>
    <variation>N</variation>
    <location>
        <position position="315"/>
    </location>
</feature>
<feature type="sequence conflict" description="In Ref. 4; AAF20010." evidence="5" ref="4">
    <original>Y</original>
    <variation>F</variation>
    <location>
        <position position="370"/>
    </location>
</feature>
<sequence length="418" mass="47625">MRVWVPVGVLTSLAYCFHQRRVALAEQRAPNGQRPVDRNLLELKMVQVVFRHGARSPLKPLPLEEQVEWNPKLLEIPPQTRFDYTVTNLAGGPKPHSHYDTEYRKTTLRGGVLAGQLTKVGMQQMFALGEKLRKNYVEDIPFLSPVYNPQEVFIRSTNMFRNLESTRCLLAGLFQHQKGSAVIHTDEASSEVLYPNYQSCWVLKEKTRGRKKAAISQPGISEDLEKVKTGVGINNGDDVDFFVLLDNVAAEQVHSLLNCPALERFAQLIEQRAVDMALYVVEQEDRESIQMAVGPFLHILEGNLLKTVDPTTAPSKTRKMYLYATHDVTLLPMLLALGIFDQKWPPFAVDLTMELYQHQESKEWFVQLFYNGKEQVPRGCPDKLCPLDKFLNTMSVYSVSPEKYRTLCSKTRIVELGE</sequence>
<accession>Q8BP40</accession>
<accession>Q3TNE2</accession>
<accession>Q8BN33</accession>
<accession>Q9JMG5</accession>
<accession>Q9QXG5</accession>
<gene>
    <name type="primary">Acp6</name>
    <name type="synonym">Acpl1</name>
    <name type="synonym">Lpap</name>
</gene>
<keyword id="KW-0025">Alternative splicing</keyword>
<keyword id="KW-0378">Hydrolase</keyword>
<keyword id="KW-0443">Lipid metabolism</keyword>
<keyword id="KW-0496">Mitochondrion</keyword>
<keyword id="KW-1208">Phospholipid metabolism</keyword>
<keyword id="KW-1185">Reference proteome</keyword>
<keyword id="KW-0809">Transit peptide</keyword>
<comment type="function">
    <text evidence="2">Hydrolyzes lysophosphatidic acid (LPA) containing a medium length fatty acid chain to the corresponding monoacylglycerol. Has highest activity with lysophosphatidic acid containing myristate (C14:0), monounsaturated oleate (C18:1) or palmitate (C16:0), and lower activity with C18:0 and C6:0 lysophosphatidic acid.</text>
</comment>
<comment type="catalytic activity">
    <reaction evidence="2">
        <text>a phosphate monoester + H2O = an alcohol + phosphate</text>
        <dbReference type="Rhea" id="RHEA:15017"/>
        <dbReference type="ChEBI" id="CHEBI:15377"/>
        <dbReference type="ChEBI" id="CHEBI:30879"/>
        <dbReference type="ChEBI" id="CHEBI:43474"/>
        <dbReference type="ChEBI" id="CHEBI:67140"/>
        <dbReference type="EC" id="3.1.3.2"/>
    </reaction>
    <physiologicalReaction direction="left-to-right" evidence="2">
        <dbReference type="Rhea" id="RHEA:15018"/>
    </physiologicalReaction>
</comment>
<comment type="catalytic activity">
    <reaction evidence="2">
        <text>1-(9Z-octadecenoyl)-sn-glycero-3-phosphate + H2O = 1-(9Z-octadecenoyl)-sn-glycerol + phosphate</text>
        <dbReference type="Rhea" id="RHEA:39835"/>
        <dbReference type="ChEBI" id="CHEBI:15377"/>
        <dbReference type="ChEBI" id="CHEBI:43474"/>
        <dbReference type="ChEBI" id="CHEBI:74544"/>
        <dbReference type="ChEBI" id="CHEBI:75757"/>
    </reaction>
    <physiologicalReaction direction="left-to-right" evidence="2">
        <dbReference type="Rhea" id="RHEA:39836"/>
    </physiologicalReaction>
</comment>
<comment type="subunit">
    <text evidence="2">Monomer.</text>
</comment>
<comment type="subcellular location">
    <subcellularLocation>
        <location evidence="3">Mitochondrion</location>
    </subcellularLocation>
</comment>
<comment type="alternative products">
    <event type="alternative splicing"/>
    <isoform>
        <id>Q8BP40-1</id>
        <name>1</name>
        <sequence type="displayed"/>
    </isoform>
    <isoform>
        <id>Q8BP40-2</id>
        <name>2</name>
        <sequence type="described" ref="VSP_014123 VSP_014124"/>
    </isoform>
</comment>
<comment type="similarity">
    <text evidence="5">Belongs to the histidine acid phosphatase family.</text>
</comment>
<comment type="sequence caution" evidence="5">
    <conflict type="frameshift">
        <sequence resource="EMBL-CDS" id="AAF20010"/>
    </conflict>
</comment>
<comment type="sequence caution" evidence="5">
    <conflict type="frameshift">
        <sequence resource="EMBL-CDS" id="BAA94308"/>
    </conflict>
</comment>
<proteinExistence type="evidence at protein level"/>
<organism>
    <name type="scientific">Mus musculus</name>
    <name type="common">Mouse</name>
    <dbReference type="NCBI Taxonomy" id="10090"/>
    <lineage>
        <taxon>Eukaryota</taxon>
        <taxon>Metazoa</taxon>
        <taxon>Chordata</taxon>
        <taxon>Craniata</taxon>
        <taxon>Vertebrata</taxon>
        <taxon>Euteleostomi</taxon>
        <taxon>Mammalia</taxon>
        <taxon>Eutheria</taxon>
        <taxon>Euarchontoglires</taxon>
        <taxon>Glires</taxon>
        <taxon>Rodentia</taxon>
        <taxon>Myomorpha</taxon>
        <taxon>Muroidea</taxon>
        <taxon>Muridae</taxon>
        <taxon>Murinae</taxon>
        <taxon>Mus</taxon>
        <taxon>Mus</taxon>
    </lineage>
</organism>
<protein>
    <recommendedName>
        <fullName>Lysophosphatidic acid phosphatase type 6</fullName>
        <ecNumber evidence="2">3.1.3.2</ecNumber>
    </recommendedName>
    <alternativeName>
        <fullName>Acid phosphatase 6, lysophosphatidic</fullName>
    </alternativeName>
    <alternativeName>
        <fullName>Acid phosphatase-like protein 1</fullName>
    </alternativeName>
    <alternativeName>
        <fullName>PACPL1</fullName>
    </alternativeName>
</protein>
<evidence type="ECO:0000250" key="1"/>
<evidence type="ECO:0000250" key="2">
    <source>
        <dbReference type="UniProtKB" id="Q9NPH0"/>
    </source>
</evidence>
<evidence type="ECO:0000269" key="3">
    <source>
    </source>
</evidence>
<evidence type="ECO:0000303" key="4">
    <source>
    </source>
</evidence>
<evidence type="ECO:0000305" key="5"/>